<protein>
    <recommendedName>
        <fullName evidence="1">Cysteine--tRNA ligase</fullName>
        <ecNumber evidence="1">6.1.1.16</ecNumber>
    </recommendedName>
    <alternativeName>
        <fullName evidence="1">Cysteinyl-tRNA synthetase</fullName>
        <shortName evidence="1">CysRS</shortName>
    </alternativeName>
</protein>
<evidence type="ECO:0000255" key="1">
    <source>
        <dbReference type="HAMAP-Rule" id="MF_00041"/>
    </source>
</evidence>
<keyword id="KW-0030">Aminoacyl-tRNA synthetase</keyword>
<keyword id="KW-0067">ATP-binding</keyword>
<keyword id="KW-0963">Cytoplasm</keyword>
<keyword id="KW-0436">Ligase</keyword>
<keyword id="KW-0479">Metal-binding</keyword>
<keyword id="KW-0547">Nucleotide-binding</keyword>
<keyword id="KW-0648">Protein biosynthesis</keyword>
<keyword id="KW-1185">Reference proteome</keyword>
<keyword id="KW-0862">Zinc</keyword>
<feature type="chain" id="PRO_1000117308" description="Cysteine--tRNA ligase">
    <location>
        <begin position="1"/>
        <end position="460"/>
    </location>
</feature>
<feature type="short sequence motif" description="'HIGH' region">
    <location>
        <begin position="30"/>
        <end position="40"/>
    </location>
</feature>
<feature type="short sequence motif" description="'KMSKS' region">
    <location>
        <begin position="266"/>
        <end position="270"/>
    </location>
</feature>
<feature type="binding site" evidence="1">
    <location>
        <position position="28"/>
    </location>
    <ligand>
        <name>Zn(2+)</name>
        <dbReference type="ChEBI" id="CHEBI:29105"/>
    </ligand>
</feature>
<feature type="binding site" evidence="1">
    <location>
        <position position="209"/>
    </location>
    <ligand>
        <name>Zn(2+)</name>
        <dbReference type="ChEBI" id="CHEBI:29105"/>
    </ligand>
</feature>
<feature type="binding site" evidence="1">
    <location>
        <position position="234"/>
    </location>
    <ligand>
        <name>Zn(2+)</name>
        <dbReference type="ChEBI" id="CHEBI:29105"/>
    </ligand>
</feature>
<feature type="binding site" evidence="1">
    <location>
        <position position="238"/>
    </location>
    <ligand>
        <name>Zn(2+)</name>
        <dbReference type="ChEBI" id="CHEBI:29105"/>
    </ligand>
</feature>
<feature type="binding site" evidence="1">
    <location>
        <position position="269"/>
    </location>
    <ligand>
        <name>ATP</name>
        <dbReference type="ChEBI" id="CHEBI:30616"/>
    </ligand>
</feature>
<comment type="catalytic activity">
    <reaction evidence="1">
        <text>tRNA(Cys) + L-cysteine + ATP = L-cysteinyl-tRNA(Cys) + AMP + diphosphate</text>
        <dbReference type="Rhea" id="RHEA:17773"/>
        <dbReference type="Rhea" id="RHEA-COMP:9661"/>
        <dbReference type="Rhea" id="RHEA-COMP:9679"/>
        <dbReference type="ChEBI" id="CHEBI:30616"/>
        <dbReference type="ChEBI" id="CHEBI:33019"/>
        <dbReference type="ChEBI" id="CHEBI:35235"/>
        <dbReference type="ChEBI" id="CHEBI:78442"/>
        <dbReference type="ChEBI" id="CHEBI:78517"/>
        <dbReference type="ChEBI" id="CHEBI:456215"/>
        <dbReference type="EC" id="6.1.1.16"/>
    </reaction>
</comment>
<comment type="cofactor">
    <cofactor evidence="1">
        <name>Zn(2+)</name>
        <dbReference type="ChEBI" id="CHEBI:29105"/>
    </cofactor>
    <text evidence="1">Binds 1 zinc ion per subunit.</text>
</comment>
<comment type="subunit">
    <text evidence="1">Monomer.</text>
</comment>
<comment type="subcellular location">
    <subcellularLocation>
        <location evidence="1">Cytoplasm</location>
    </subcellularLocation>
</comment>
<comment type="similarity">
    <text evidence="1">Belongs to the class-I aminoacyl-tRNA synthetase family.</text>
</comment>
<accession>B8GNT5</accession>
<proteinExistence type="inferred from homology"/>
<name>SYC_THISH</name>
<sequence>MLQIHNSLTRRKETFTPMEPGRVRMYVCGMTVYDYCHLGHARVLVVFDVVYRYLKALGFDVTYIRNITDIDDKIIRRAAENGEDIRALTDRFIAAMHEDAEALGVLPPSAEPRATEHIDGMLAMIGTLVERGYAYAGDNGDVYYAVAKFEPYGRLSGKRLEDLRAGERVAPDEAKRDPLDFVLWKAAKPGEPAWDSPWGPGRPGWHIECSAMSTHYLGNHFDIHGGGQDLQFPHHENEIAQSEAATCEHFVNYWMHNGFVRVNEEKMSKSLGNFFTVREVLARYPAEVVRYFILSSHYRSPLNYSDEPLDAARAGLTRLYTALRGVQAVDPAGQGEGYRRRFQAAMDDDFNTPVAMAVLFDIARELNRLRDEDPAGAAPLAGLLRELGGMLGLLAGDPEAFLKGGEAGDLDEAAIEALIAQRLAARKAKDFAEADRIRDELAGQGVVLEDGPGGTTWRRG</sequence>
<reference key="1">
    <citation type="journal article" date="2011" name="Stand. Genomic Sci.">
        <title>Complete genome sequence of 'Thioalkalivibrio sulfidophilus' HL-EbGr7.</title>
        <authorList>
            <person name="Muyzer G."/>
            <person name="Sorokin D.Y."/>
            <person name="Mavromatis K."/>
            <person name="Lapidus A."/>
            <person name="Clum A."/>
            <person name="Ivanova N."/>
            <person name="Pati A."/>
            <person name="d'Haeseleer P."/>
            <person name="Woyke T."/>
            <person name="Kyrpides N.C."/>
        </authorList>
    </citation>
    <scope>NUCLEOTIDE SEQUENCE [LARGE SCALE GENOMIC DNA]</scope>
    <source>
        <strain>HL-EbGR7</strain>
    </source>
</reference>
<gene>
    <name evidence="1" type="primary">cysS</name>
    <name type="ordered locus">Tgr7_0936</name>
</gene>
<organism>
    <name type="scientific">Thioalkalivibrio sulfidiphilus (strain HL-EbGR7)</name>
    <dbReference type="NCBI Taxonomy" id="396588"/>
    <lineage>
        <taxon>Bacteria</taxon>
        <taxon>Pseudomonadati</taxon>
        <taxon>Pseudomonadota</taxon>
        <taxon>Gammaproteobacteria</taxon>
        <taxon>Chromatiales</taxon>
        <taxon>Ectothiorhodospiraceae</taxon>
        <taxon>Thioalkalivibrio</taxon>
    </lineage>
</organism>
<dbReference type="EC" id="6.1.1.16" evidence="1"/>
<dbReference type="EMBL" id="CP001339">
    <property type="protein sequence ID" value="ACL72024.1"/>
    <property type="molecule type" value="Genomic_DNA"/>
</dbReference>
<dbReference type="RefSeq" id="WP_012637509.1">
    <property type="nucleotide sequence ID" value="NC_011901.1"/>
</dbReference>
<dbReference type="SMR" id="B8GNT5"/>
<dbReference type="STRING" id="396588.Tgr7_0936"/>
<dbReference type="KEGG" id="tgr:Tgr7_0936"/>
<dbReference type="eggNOG" id="COG0215">
    <property type="taxonomic scope" value="Bacteria"/>
</dbReference>
<dbReference type="HOGENOM" id="CLU_013528_0_1_6"/>
<dbReference type="OrthoDB" id="9815130at2"/>
<dbReference type="Proteomes" id="UP000002383">
    <property type="component" value="Chromosome"/>
</dbReference>
<dbReference type="GO" id="GO:0005829">
    <property type="term" value="C:cytosol"/>
    <property type="evidence" value="ECO:0007669"/>
    <property type="project" value="TreeGrafter"/>
</dbReference>
<dbReference type="GO" id="GO:0005524">
    <property type="term" value="F:ATP binding"/>
    <property type="evidence" value="ECO:0007669"/>
    <property type="project" value="UniProtKB-UniRule"/>
</dbReference>
<dbReference type="GO" id="GO:0004817">
    <property type="term" value="F:cysteine-tRNA ligase activity"/>
    <property type="evidence" value="ECO:0007669"/>
    <property type="project" value="UniProtKB-UniRule"/>
</dbReference>
<dbReference type="GO" id="GO:0008270">
    <property type="term" value="F:zinc ion binding"/>
    <property type="evidence" value="ECO:0007669"/>
    <property type="project" value="UniProtKB-UniRule"/>
</dbReference>
<dbReference type="GO" id="GO:0006423">
    <property type="term" value="P:cysteinyl-tRNA aminoacylation"/>
    <property type="evidence" value="ECO:0007669"/>
    <property type="project" value="UniProtKB-UniRule"/>
</dbReference>
<dbReference type="CDD" id="cd07963">
    <property type="entry name" value="Anticodon_Ia_Cys"/>
    <property type="match status" value="1"/>
</dbReference>
<dbReference type="CDD" id="cd00672">
    <property type="entry name" value="CysRS_core"/>
    <property type="match status" value="1"/>
</dbReference>
<dbReference type="FunFam" id="3.40.50.620:FF:000009">
    <property type="entry name" value="Cysteine--tRNA ligase"/>
    <property type="match status" value="1"/>
</dbReference>
<dbReference type="Gene3D" id="1.20.120.1910">
    <property type="entry name" value="Cysteine-tRNA ligase, C-terminal anti-codon recognition domain"/>
    <property type="match status" value="1"/>
</dbReference>
<dbReference type="Gene3D" id="3.40.50.620">
    <property type="entry name" value="HUPs"/>
    <property type="match status" value="1"/>
</dbReference>
<dbReference type="HAMAP" id="MF_00041">
    <property type="entry name" value="Cys_tRNA_synth"/>
    <property type="match status" value="1"/>
</dbReference>
<dbReference type="InterPro" id="IPR015803">
    <property type="entry name" value="Cys-tRNA-ligase"/>
</dbReference>
<dbReference type="InterPro" id="IPR015273">
    <property type="entry name" value="Cys-tRNA-synt_Ia_DALR"/>
</dbReference>
<dbReference type="InterPro" id="IPR024909">
    <property type="entry name" value="Cys-tRNA/MSH_ligase"/>
</dbReference>
<dbReference type="InterPro" id="IPR056411">
    <property type="entry name" value="CysS_C"/>
</dbReference>
<dbReference type="InterPro" id="IPR014729">
    <property type="entry name" value="Rossmann-like_a/b/a_fold"/>
</dbReference>
<dbReference type="InterPro" id="IPR032678">
    <property type="entry name" value="tRNA-synt_1_cat_dom"/>
</dbReference>
<dbReference type="InterPro" id="IPR009080">
    <property type="entry name" value="tRNAsynth_Ia_anticodon-bd"/>
</dbReference>
<dbReference type="NCBIfam" id="TIGR00435">
    <property type="entry name" value="cysS"/>
    <property type="match status" value="1"/>
</dbReference>
<dbReference type="PANTHER" id="PTHR10890:SF3">
    <property type="entry name" value="CYSTEINE--TRNA LIGASE, CYTOPLASMIC"/>
    <property type="match status" value="1"/>
</dbReference>
<dbReference type="PANTHER" id="PTHR10890">
    <property type="entry name" value="CYSTEINYL-TRNA SYNTHETASE"/>
    <property type="match status" value="1"/>
</dbReference>
<dbReference type="Pfam" id="PF23493">
    <property type="entry name" value="CysS_C"/>
    <property type="match status" value="1"/>
</dbReference>
<dbReference type="Pfam" id="PF09190">
    <property type="entry name" value="DALR_2"/>
    <property type="match status" value="1"/>
</dbReference>
<dbReference type="Pfam" id="PF01406">
    <property type="entry name" value="tRNA-synt_1e"/>
    <property type="match status" value="1"/>
</dbReference>
<dbReference type="PRINTS" id="PR00983">
    <property type="entry name" value="TRNASYNTHCYS"/>
</dbReference>
<dbReference type="SMART" id="SM00840">
    <property type="entry name" value="DALR_2"/>
    <property type="match status" value="1"/>
</dbReference>
<dbReference type="SUPFAM" id="SSF47323">
    <property type="entry name" value="Anticodon-binding domain of a subclass of class I aminoacyl-tRNA synthetases"/>
    <property type="match status" value="1"/>
</dbReference>
<dbReference type="SUPFAM" id="SSF52374">
    <property type="entry name" value="Nucleotidylyl transferase"/>
    <property type="match status" value="1"/>
</dbReference>